<name>ATP62_HAHCH</name>
<evidence type="ECO:0000255" key="1">
    <source>
        <dbReference type="HAMAP-Rule" id="MF_01393"/>
    </source>
</evidence>
<reference key="1">
    <citation type="journal article" date="2005" name="Nucleic Acids Res.">
        <title>Genomic blueprint of Hahella chejuensis, a marine microbe producing an algicidal agent.</title>
        <authorList>
            <person name="Jeong H."/>
            <person name="Yim J.H."/>
            <person name="Lee C."/>
            <person name="Choi S.-H."/>
            <person name="Park Y.K."/>
            <person name="Yoon S.H."/>
            <person name="Hur C.-G."/>
            <person name="Kang H.-Y."/>
            <person name="Kim D."/>
            <person name="Lee H.H."/>
            <person name="Park K.H."/>
            <person name="Park S.-H."/>
            <person name="Park H.-S."/>
            <person name="Lee H.K."/>
            <person name="Oh T.K."/>
            <person name="Kim J.F."/>
        </authorList>
    </citation>
    <scope>NUCLEOTIDE SEQUENCE [LARGE SCALE GENOMIC DNA]</scope>
    <source>
        <strain>KCTC 2396</strain>
    </source>
</reference>
<keyword id="KW-0066">ATP synthesis</keyword>
<keyword id="KW-0997">Cell inner membrane</keyword>
<keyword id="KW-1003">Cell membrane</keyword>
<keyword id="KW-0138">CF(0)</keyword>
<keyword id="KW-0375">Hydrogen ion transport</keyword>
<keyword id="KW-0406">Ion transport</keyword>
<keyword id="KW-0472">Membrane</keyword>
<keyword id="KW-1185">Reference proteome</keyword>
<keyword id="KW-0812">Transmembrane</keyword>
<keyword id="KW-1133">Transmembrane helix</keyword>
<keyword id="KW-0813">Transport</keyword>
<dbReference type="EMBL" id="CP000155">
    <property type="protein sequence ID" value="ABC33689.1"/>
    <property type="molecule type" value="Genomic_DNA"/>
</dbReference>
<dbReference type="RefSeq" id="WP_011400739.1">
    <property type="nucleotide sequence ID" value="NC_007645.1"/>
</dbReference>
<dbReference type="SMR" id="Q2S6N5"/>
<dbReference type="STRING" id="349521.HCH_07078"/>
<dbReference type="KEGG" id="hch:HCH_07078"/>
<dbReference type="eggNOG" id="COG0356">
    <property type="taxonomic scope" value="Bacteria"/>
</dbReference>
<dbReference type="HOGENOM" id="CLU_041018_1_0_6"/>
<dbReference type="OrthoDB" id="9789241at2"/>
<dbReference type="Proteomes" id="UP000000238">
    <property type="component" value="Chromosome"/>
</dbReference>
<dbReference type="GO" id="GO:0005886">
    <property type="term" value="C:plasma membrane"/>
    <property type="evidence" value="ECO:0007669"/>
    <property type="project" value="UniProtKB-SubCell"/>
</dbReference>
<dbReference type="GO" id="GO:0045259">
    <property type="term" value="C:proton-transporting ATP synthase complex"/>
    <property type="evidence" value="ECO:0007669"/>
    <property type="project" value="UniProtKB-KW"/>
</dbReference>
<dbReference type="GO" id="GO:0046933">
    <property type="term" value="F:proton-transporting ATP synthase activity, rotational mechanism"/>
    <property type="evidence" value="ECO:0007669"/>
    <property type="project" value="UniProtKB-UniRule"/>
</dbReference>
<dbReference type="GO" id="GO:0042777">
    <property type="term" value="P:proton motive force-driven plasma membrane ATP synthesis"/>
    <property type="evidence" value="ECO:0007669"/>
    <property type="project" value="TreeGrafter"/>
</dbReference>
<dbReference type="CDD" id="cd00310">
    <property type="entry name" value="ATP-synt_Fo_a_6"/>
    <property type="match status" value="1"/>
</dbReference>
<dbReference type="FunFam" id="1.20.120.220:FF:000002">
    <property type="entry name" value="ATP synthase subunit a"/>
    <property type="match status" value="1"/>
</dbReference>
<dbReference type="Gene3D" id="1.20.120.220">
    <property type="entry name" value="ATP synthase, F0 complex, subunit A"/>
    <property type="match status" value="1"/>
</dbReference>
<dbReference type="HAMAP" id="MF_01393">
    <property type="entry name" value="ATP_synth_a_bact"/>
    <property type="match status" value="1"/>
</dbReference>
<dbReference type="InterPro" id="IPR045082">
    <property type="entry name" value="ATP_syn_F0_a_bact/chloroplast"/>
</dbReference>
<dbReference type="InterPro" id="IPR000568">
    <property type="entry name" value="ATP_synth_F0_asu"/>
</dbReference>
<dbReference type="InterPro" id="IPR023011">
    <property type="entry name" value="ATP_synth_F0_asu_AS"/>
</dbReference>
<dbReference type="InterPro" id="IPR035908">
    <property type="entry name" value="F0_ATP_A_sf"/>
</dbReference>
<dbReference type="NCBIfam" id="TIGR01131">
    <property type="entry name" value="ATP_synt_6_or_A"/>
    <property type="match status" value="1"/>
</dbReference>
<dbReference type="NCBIfam" id="NF004477">
    <property type="entry name" value="PRK05815.1-1"/>
    <property type="match status" value="1"/>
</dbReference>
<dbReference type="PANTHER" id="PTHR42823">
    <property type="entry name" value="ATP SYNTHASE SUBUNIT A, CHLOROPLASTIC"/>
    <property type="match status" value="1"/>
</dbReference>
<dbReference type="PANTHER" id="PTHR42823:SF3">
    <property type="entry name" value="ATP SYNTHASE SUBUNIT A, CHLOROPLASTIC"/>
    <property type="match status" value="1"/>
</dbReference>
<dbReference type="Pfam" id="PF00119">
    <property type="entry name" value="ATP-synt_A"/>
    <property type="match status" value="1"/>
</dbReference>
<dbReference type="SUPFAM" id="SSF81336">
    <property type="entry name" value="F1F0 ATP synthase subunit A"/>
    <property type="match status" value="1"/>
</dbReference>
<dbReference type="PROSITE" id="PS00449">
    <property type="entry name" value="ATPASE_A"/>
    <property type="match status" value="1"/>
</dbReference>
<comment type="function">
    <text evidence="1">Key component of the proton channel; it plays a direct role in the translocation of protons across the membrane.</text>
</comment>
<comment type="subunit">
    <text evidence="1">F-type ATPases have 2 components, CF(1) - the catalytic core - and CF(0) - the membrane proton channel. CF(1) has five subunits: alpha(3), beta(3), gamma(1), delta(1), epsilon(1). CF(0) has three main subunits: a(1), b(2) and c(9-12). The alpha and beta chains form an alternating ring which encloses part of the gamma chain. CF(1) is attached to CF(0) by a central stalk formed by the gamma and epsilon chains, while a peripheral stalk is formed by the delta and b chains.</text>
</comment>
<comment type="subcellular location">
    <subcellularLocation>
        <location evidence="1">Cell inner membrane</location>
        <topology evidence="1">Multi-pass membrane protein</topology>
    </subcellularLocation>
</comment>
<comment type="similarity">
    <text evidence="1">Belongs to the ATPase A chain family.</text>
</comment>
<protein>
    <recommendedName>
        <fullName evidence="1">ATP synthase subunit a 2</fullName>
    </recommendedName>
    <alternativeName>
        <fullName evidence="1">ATP synthase F0 sector subunit a 2</fullName>
    </alternativeName>
    <alternativeName>
        <fullName evidence="1">F-ATPase subunit 6 2</fullName>
    </alternativeName>
</protein>
<gene>
    <name evidence="1" type="primary">atpB2</name>
    <name type="ordered locus">HCH_07078</name>
</gene>
<sequence length="276" mass="30919">MAGENPTASEYIQHHLQNLTFGNHPEHGWSFAHTAQEAKEMGFWAVHVDSLGWSIALGALFVWLFRKAAVKATSGVPSGLQNFVEIMVDFVDKSVKETFHGKNAVIAPLALTVFCWIFLMNLMDLVPVDFLPRLFQVITGDDHAYFKVVPTTDVNVTLGMSLSVFFLIIYYSIKVKGVGGFLGELTLQPFGKWMLPFNLLLEGVGLIAKPISLALRLFGNLYAGELLFILIALMPFWAQWALSVPWAIFHILVIVLQAFIFMMLTIVYLSMAHEDH</sequence>
<proteinExistence type="inferred from homology"/>
<feature type="chain" id="PRO_0000362325" description="ATP synthase subunit a 2">
    <location>
        <begin position="1"/>
        <end position="276"/>
    </location>
</feature>
<feature type="transmembrane region" description="Helical" evidence="1">
    <location>
        <begin position="45"/>
        <end position="65"/>
    </location>
</feature>
<feature type="transmembrane region" description="Helical" evidence="1">
    <location>
        <begin position="105"/>
        <end position="125"/>
    </location>
</feature>
<feature type="transmembrane region" description="Helical" evidence="1">
    <location>
        <begin position="154"/>
        <end position="173"/>
    </location>
</feature>
<feature type="transmembrane region" description="Helical" evidence="1">
    <location>
        <begin position="226"/>
        <end position="246"/>
    </location>
</feature>
<feature type="transmembrane region" description="Helical" evidence="1">
    <location>
        <begin position="247"/>
        <end position="267"/>
    </location>
</feature>
<accession>Q2S6N5</accession>
<organism>
    <name type="scientific">Hahella chejuensis (strain KCTC 2396)</name>
    <dbReference type="NCBI Taxonomy" id="349521"/>
    <lineage>
        <taxon>Bacteria</taxon>
        <taxon>Pseudomonadati</taxon>
        <taxon>Pseudomonadota</taxon>
        <taxon>Gammaproteobacteria</taxon>
        <taxon>Oceanospirillales</taxon>
        <taxon>Hahellaceae</taxon>
        <taxon>Hahella</taxon>
    </lineage>
</organism>